<protein>
    <recommendedName>
        <fullName>Zinc finger protein 507</fullName>
    </recommendedName>
</protein>
<evidence type="ECO:0000250" key="1">
    <source>
        <dbReference type="UniProtKB" id="Q8TCN5"/>
    </source>
</evidence>
<evidence type="ECO:0000255" key="2">
    <source>
        <dbReference type="PROSITE-ProRule" id="PRU00042"/>
    </source>
</evidence>
<evidence type="ECO:0000256" key="3">
    <source>
        <dbReference type="SAM" id="MobiDB-lite"/>
    </source>
</evidence>
<evidence type="ECO:0000305" key="4"/>
<gene>
    <name type="primary">Znf507</name>
    <name type="synonym">Kiaa1084</name>
    <name type="synonym">Zfp507</name>
</gene>
<accession>Q6ZPY5</accession>
<accession>Q3UQU3</accession>
<accession>Q80VK1</accession>
<name>ZN507_MOUSE</name>
<keyword id="KW-0238">DNA-binding</keyword>
<keyword id="KW-0479">Metal-binding</keyword>
<keyword id="KW-0539">Nucleus</keyword>
<keyword id="KW-0597">Phosphoprotein</keyword>
<keyword id="KW-1185">Reference proteome</keyword>
<keyword id="KW-0677">Repeat</keyword>
<keyword id="KW-0804">Transcription</keyword>
<keyword id="KW-0805">Transcription regulation</keyword>
<keyword id="KW-0862">Zinc</keyword>
<keyword id="KW-0863">Zinc-finger</keyword>
<reference key="1">
    <citation type="journal article" date="2003" name="DNA Res.">
        <title>Prediction of the coding sequences of mouse homologues of KIAA gene: III. The complete nucleotide sequences of 500 mouse KIAA-homologous cDNAs identified by screening of terminal sequences of cDNA clones randomly sampled from size-fractionated libraries.</title>
        <authorList>
            <person name="Okazaki N."/>
            <person name="Kikuno R."/>
            <person name="Ohara R."/>
            <person name="Inamoto S."/>
            <person name="Koseki H."/>
            <person name="Hiraoka S."/>
            <person name="Saga Y."/>
            <person name="Nagase T."/>
            <person name="Ohara O."/>
            <person name="Koga H."/>
        </authorList>
    </citation>
    <scope>NUCLEOTIDE SEQUENCE [LARGE SCALE MRNA]</scope>
    <source>
        <tissue>Embryonic tail</tissue>
    </source>
</reference>
<reference key="2">
    <citation type="journal article" date="2004" name="Genome Res.">
        <title>The status, quality, and expansion of the NIH full-length cDNA project: the Mammalian Gene Collection (MGC).</title>
        <authorList>
            <consortium name="The MGC Project Team"/>
        </authorList>
    </citation>
    <scope>NUCLEOTIDE SEQUENCE [LARGE SCALE MRNA]</scope>
    <source>
        <strain>129/Sv X 129SvCp</strain>
        <tissue>Embryonic stem cell</tissue>
    </source>
</reference>
<reference key="3">
    <citation type="journal article" date="2005" name="Science">
        <title>The transcriptional landscape of the mammalian genome.</title>
        <authorList>
            <person name="Carninci P."/>
            <person name="Kasukawa T."/>
            <person name="Katayama S."/>
            <person name="Gough J."/>
            <person name="Frith M.C."/>
            <person name="Maeda N."/>
            <person name="Oyama R."/>
            <person name="Ravasi T."/>
            <person name="Lenhard B."/>
            <person name="Wells C."/>
            <person name="Kodzius R."/>
            <person name="Shimokawa K."/>
            <person name="Bajic V.B."/>
            <person name="Brenner S.E."/>
            <person name="Batalov S."/>
            <person name="Forrest A.R."/>
            <person name="Zavolan M."/>
            <person name="Davis M.J."/>
            <person name="Wilming L.G."/>
            <person name="Aidinis V."/>
            <person name="Allen J.E."/>
            <person name="Ambesi-Impiombato A."/>
            <person name="Apweiler R."/>
            <person name="Aturaliya R.N."/>
            <person name="Bailey T.L."/>
            <person name="Bansal M."/>
            <person name="Baxter L."/>
            <person name="Beisel K.W."/>
            <person name="Bersano T."/>
            <person name="Bono H."/>
            <person name="Chalk A.M."/>
            <person name="Chiu K.P."/>
            <person name="Choudhary V."/>
            <person name="Christoffels A."/>
            <person name="Clutterbuck D.R."/>
            <person name="Crowe M.L."/>
            <person name="Dalla E."/>
            <person name="Dalrymple B.P."/>
            <person name="de Bono B."/>
            <person name="Della Gatta G."/>
            <person name="di Bernardo D."/>
            <person name="Down T."/>
            <person name="Engstrom P."/>
            <person name="Fagiolini M."/>
            <person name="Faulkner G."/>
            <person name="Fletcher C.F."/>
            <person name="Fukushima T."/>
            <person name="Furuno M."/>
            <person name="Futaki S."/>
            <person name="Gariboldi M."/>
            <person name="Georgii-Hemming P."/>
            <person name="Gingeras T.R."/>
            <person name="Gojobori T."/>
            <person name="Green R.E."/>
            <person name="Gustincich S."/>
            <person name="Harbers M."/>
            <person name="Hayashi Y."/>
            <person name="Hensch T.K."/>
            <person name="Hirokawa N."/>
            <person name="Hill D."/>
            <person name="Huminiecki L."/>
            <person name="Iacono M."/>
            <person name="Ikeo K."/>
            <person name="Iwama A."/>
            <person name="Ishikawa T."/>
            <person name="Jakt M."/>
            <person name="Kanapin A."/>
            <person name="Katoh M."/>
            <person name="Kawasawa Y."/>
            <person name="Kelso J."/>
            <person name="Kitamura H."/>
            <person name="Kitano H."/>
            <person name="Kollias G."/>
            <person name="Krishnan S.P."/>
            <person name="Kruger A."/>
            <person name="Kummerfeld S.K."/>
            <person name="Kurochkin I.V."/>
            <person name="Lareau L.F."/>
            <person name="Lazarevic D."/>
            <person name="Lipovich L."/>
            <person name="Liu J."/>
            <person name="Liuni S."/>
            <person name="McWilliam S."/>
            <person name="Madan Babu M."/>
            <person name="Madera M."/>
            <person name="Marchionni L."/>
            <person name="Matsuda H."/>
            <person name="Matsuzawa S."/>
            <person name="Miki H."/>
            <person name="Mignone F."/>
            <person name="Miyake S."/>
            <person name="Morris K."/>
            <person name="Mottagui-Tabar S."/>
            <person name="Mulder N."/>
            <person name="Nakano N."/>
            <person name="Nakauchi H."/>
            <person name="Ng P."/>
            <person name="Nilsson R."/>
            <person name="Nishiguchi S."/>
            <person name="Nishikawa S."/>
            <person name="Nori F."/>
            <person name="Ohara O."/>
            <person name="Okazaki Y."/>
            <person name="Orlando V."/>
            <person name="Pang K.C."/>
            <person name="Pavan W.J."/>
            <person name="Pavesi G."/>
            <person name="Pesole G."/>
            <person name="Petrovsky N."/>
            <person name="Piazza S."/>
            <person name="Reed J."/>
            <person name="Reid J.F."/>
            <person name="Ring B.Z."/>
            <person name="Ringwald M."/>
            <person name="Rost B."/>
            <person name="Ruan Y."/>
            <person name="Salzberg S.L."/>
            <person name="Sandelin A."/>
            <person name="Schneider C."/>
            <person name="Schoenbach C."/>
            <person name="Sekiguchi K."/>
            <person name="Semple C.A."/>
            <person name="Seno S."/>
            <person name="Sessa L."/>
            <person name="Sheng Y."/>
            <person name="Shibata Y."/>
            <person name="Shimada H."/>
            <person name="Shimada K."/>
            <person name="Silva D."/>
            <person name="Sinclair B."/>
            <person name="Sperling S."/>
            <person name="Stupka E."/>
            <person name="Sugiura K."/>
            <person name="Sultana R."/>
            <person name="Takenaka Y."/>
            <person name="Taki K."/>
            <person name="Tammoja K."/>
            <person name="Tan S.L."/>
            <person name="Tang S."/>
            <person name="Taylor M.S."/>
            <person name="Tegner J."/>
            <person name="Teichmann S.A."/>
            <person name="Ueda H.R."/>
            <person name="van Nimwegen E."/>
            <person name="Verardo R."/>
            <person name="Wei C.L."/>
            <person name="Yagi K."/>
            <person name="Yamanishi H."/>
            <person name="Zabarovsky E."/>
            <person name="Zhu S."/>
            <person name="Zimmer A."/>
            <person name="Hide W."/>
            <person name="Bult C."/>
            <person name="Grimmond S.M."/>
            <person name="Teasdale R.D."/>
            <person name="Liu E.T."/>
            <person name="Brusic V."/>
            <person name="Quackenbush J."/>
            <person name="Wahlestedt C."/>
            <person name="Mattick J.S."/>
            <person name="Hume D.A."/>
            <person name="Kai C."/>
            <person name="Sasaki D."/>
            <person name="Tomaru Y."/>
            <person name="Fukuda S."/>
            <person name="Kanamori-Katayama M."/>
            <person name="Suzuki M."/>
            <person name="Aoki J."/>
            <person name="Arakawa T."/>
            <person name="Iida J."/>
            <person name="Imamura K."/>
            <person name="Itoh M."/>
            <person name="Kato T."/>
            <person name="Kawaji H."/>
            <person name="Kawagashira N."/>
            <person name="Kawashima T."/>
            <person name="Kojima M."/>
            <person name="Kondo S."/>
            <person name="Konno H."/>
            <person name="Nakano K."/>
            <person name="Ninomiya N."/>
            <person name="Nishio T."/>
            <person name="Okada M."/>
            <person name="Plessy C."/>
            <person name="Shibata K."/>
            <person name="Shiraki T."/>
            <person name="Suzuki S."/>
            <person name="Tagami M."/>
            <person name="Waki K."/>
            <person name="Watahiki A."/>
            <person name="Okamura-Oho Y."/>
            <person name="Suzuki H."/>
            <person name="Kawai J."/>
            <person name="Hayashizaki Y."/>
        </authorList>
    </citation>
    <scope>NUCLEOTIDE SEQUENCE [LARGE SCALE MRNA] OF 1-449</scope>
    <source>
        <strain>C57BL/6J</strain>
        <tissue>Eye</tissue>
    </source>
</reference>
<organism>
    <name type="scientific">Mus musculus</name>
    <name type="common">Mouse</name>
    <dbReference type="NCBI Taxonomy" id="10090"/>
    <lineage>
        <taxon>Eukaryota</taxon>
        <taxon>Metazoa</taxon>
        <taxon>Chordata</taxon>
        <taxon>Craniata</taxon>
        <taxon>Vertebrata</taxon>
        <taxon>Euteleostomi</taxon>
        <taxon>Mammalia</taxon>
        <taxon>Eutheria</taxon>
        <taxon>Euarchontoglires</taxon>
        <taxon>Glires</taxon>
        <taxon>Rodentia</taxon>
        <taxon>Myomorpha</taxon>
        <taxon>Muroidea</taxon>
        <taxon>Muridae</taxon>
        <taxon>Murinae</taxon>
        <taxon>Mus</taxon>
        <taxon>Mus</taxon>
    </lineage>
</organism>
<feature type="chain" id="PRO_0000349309" description="Zinc finger protein 507">
    <location>
        <begin position="1"/>
        <end position="941"/>
    </location>
</feature>
<feature type="zinc finger region" description="C2H2-type 1" evidence="2">
    <location>
        <begin position="122"/>
        <end position="144"/>
    </location>
</feature>
<feature type="zinc finger region" description="C2H2-type 2" evidence="2">
    <location>
        <begin position="152"/>
        <end position="175"/>
    </location>
</feature>
<feature type="zinc finger region" description="C2H2-type 3" evidence="2">
    <location>
        <begin position="237"/>
        <end position="259"/>
    </location>
</feature>
<feature type="zinc finger region" description="C2H2-type 4" evidence="2">
    <location>
        <begin position="630"/>
        <end position="652"/>
    </location>
</feature>
<feature type="zinc finger region" description="C2H2-type 5" evidence="2">
    <location>
        <begin position="658"/>
        <end position="680"/>
    </location>
</feature>
<feature type="zinc finger region" description="C2H2-type 6" evidence="2">
    <location>
        <begin position="686"/>
        <end position="709"/>
    </location>
</feature>
<feature type="zinc finger region" description="C2H2-type 7" evidence="2">
    <location>
        <begin position="746"/>
        <end position="768"/>
    </location>
</feature>
<feature type="zinc finger region" description="C2H2-type 8" evidence="2">
    <location>
        <begin position="774"/>
        <end position="796"/>
    </location>
</feature>
<feature type="zinc finger region" description="C2H2-type 9" evidence="2">
    <location>
        <begin position="899"/>
        <end position="921"/>
    </location>
</feature>
<feature type="region of interest" description="Disordered" evidence="3">
    <location>
        <begin position="165"/>
        <end position="198"/>
    </location>
</feature>
<feature type="region of interest" description="Disordered" evidence="3">
    <location>
        <begin position="455"/>
        <end position="477"/>
    </location>
</feature>
<feature type="region of interest" description="Disordered" evidence="3">
    <location>
        <begin position="823"/>
        <end position="856"/>
    </location>
</feature>
<feature type="compositionally biased region" description="Basic and acidic residues" evidence="3">
    <location>
        <begin position="165"/>
        <end position="177"/>
    </location>
</feature>
<feature type="compositionally biased region" description="Low complexity" evidence="3">
    <location>
        <begin position="178"/>
        <end position="192"/>
    </location>
</feature>
<feature type="compositionally biased region" description="Polar residues" evidence="3">
    <location>
        <begin position="839"/>
        <end position="856"/>
    </location>
</feature>
<feature type="modified residue" description="Phosphoserine" evidence="1">
    <location>
        <position position="95"/>
    </location>
</feature>
<feature type="modified residue" description="Phosphoserine" evidence="1">
    <location>
        <position position="415"/>
    </location>
</feature>
<feature type="sequence conflict" description="In Ref. 1; BAC98093." evidence="4" ref="1">
    <original>S</original>
    <variation>Y</variation>
    <location>
        <position position="185"/>
    </location>
</feature>
<feature type="sequence conflict" description="In Ref. 2; AAH50041." evidence="4" ref="2">
    <original>QL</original>
    <variation>RQ</variation>
    <location>
        <begin position="857"/>
        <end position="858"/>
    </location>
</feature>
<comment type="function">
    <text>May be involved in transcriptional regulation.</text>
</comment>
<comment type="subcellular location">
    <subcellularLocation>
        <location evidence="4">Nucleus</location>
    </subcellularLocation>
</comment>
<comment type="similarity">
    <text evidence="4">Belongs to the krueppel C2H2-type zinc-finger protein family.</text>
</comment>
<comment type="sequence caution" evidence="4">
    <conflict type="erroneous initiation">
        <sequence resource="EMBL-CDS" id="BAC98093"/>
    </conflict>
</comment>
<sequence>MEESSSIAMLVQEIGEPEAVLTAEGVLSPSSEVDQQRKAKADPLVHVIQKLSKIVGHEKSQKCLLIGKKRPRPSETANSLEKLENCEIPAKATESPAAGVRKTEMSQASSTLASNDGKAMSYQCSLCKFLSPSFSVLKEHVKQHGQQHDVMLMCSECHATSRSQQELEAHVVSEHENSASSQARSSPSGQGATERKSETMVDIPVNMGSPQTHAVQSAAMAESGRRKWYAYEQYGMYRCLFCSYTCGQQRMLKTHAWKHAGEVNCSYPIFENENEPLGLLASSMSAAPGGVDAVVIAIGDSELSIHNGPSVQVQICSSDPPSSSPLEQSTEEGVHLNQAVTLDANEEEMLEVMSDSEENLFADSLLSSAQKIISSSPNKKGHVNVIVERLPSAEETLPPKHFLINAEMEEGKSPSPSEAQTGCVGAGNMYHADKCTVDIGGLIIGWSSAEKKDSELSKGLAPDENAPPGRRRTNSESLRLHSLAAEALVTMPIRAAELTRASLGHYGDINLLDPDTGQRQVSGPLATYSKKIMSPLKNSTDGVTSFNQSNSTVVALPEGRQELSDGQVKTGISMSLLTVIEKLRERTDQNASDDDILKELQDNAQCQPNSDGSLLGSNVVEYIPDAERPYRCRLCNYSSGNRGYIKQHLRVHRQRQPYQCPICEHIAENSKDLESHMINHCKTRIHQCKQCKESFHYKSQLRNHEREQHCLPNTLSVASNEPRISRDAADGKCAQEGNKPSTQKQYRCDVCDYTSTTYVGVRNHRRVHNSDKPYRCSLCGYVCSHPPSLKSHMWKHASDQNYNYEQVNKAINDAISQSARVLGKSRGKPLLTSSEERTGPTTGSPENLVSSSELTSQLPGEVMDASELEKLNPTGCSSDVSGRSCSLAAPGTEYCVLLFCCCICGFESTSKESLLDHMKEHEGEIVSIILNKDHSTALNAN</sequence>
<dbReference type="EMBL" id="AK129283">
    <property type="protein sequence ID" value="BAC98093.1"/>
    <property type="status" value="ALT_INIT"/>
    <property type="molecule type" value="mRNA"/>
</dbReference>
<dbReference type="EMBL" id="BC050041">
    <property type="protein sequence ID" value="AAH50041.1"/>
    <property type="molecule type" value="mRNA"/>
</dbReference>
<dbReference type="EMBL" id="AK142141">
    <property type="protein sequence ID" value="BAE24946.1"/>
    <property type="molecule type" value="mRNA"/>
</dbReference>
<dbReference type="CCDS" id="CCDS52204.1"/>
<dbReference type="RefSeq" id="NP_808407.2">
    <property type="nucleotide sequence ID" value="NM_177739.3"/>
</dbReference>
<dbReference type="RefSeq" id="XP_006540360.1">
    <property type="nucleotide sequence ID" value="XM_006540297.2"/>
</dbReference>
<dbReference type="FunCoup" id="Q6ZPY5">
    <property type="interactions" value="3325"/>
</dbReference>
<dbReference type="STRING" id="10090.ENSMUSP00000058609"/>
<dbReference type="GlyGen" id="Q6ZPY5">
    <property type="glycosylation" value="1 site"/>
</dbReference>
<dbReference type="iPTMnet" id="Q6ZPY5"/>
<dbReference type="PhosphoSitePlus" id="Q6ZPY5"/>
<dbReference type="PaxDb" id="10090-ENSMUSP00000058609"/>
<dbReference type="ProteomicsDB" id="302084"/>
<dbReference type="Antibodypedia" id="28867">
    <property type="antibodies" value="40 antibodies from 13 providers"/>
</dbReference>
<dbReference type="Ensembl" id="ENSMUST00000061586.11">
    <property type="protein sequence ID" value="ENSMUSP00000058609.5"/>
    <property type="gene ID" value="ENSMUSG00000044452.11"/>
</dbReference>
<dbReference type="GeneID" id="668501"/>
<dbReference type="KEGG" id="mmu:668501"/>
<dbReference type="UCSC" id="uc009gkh.3">
    <property type="organism name" value="mouse"/>
</dbReference>
<dbReference type="AGR" id="MGI:1916378"/>
<dbReference type="CTD" id="668501"/>
<dbReference type="MGI" id="MGI:1916378">
    <property type="gene designation" value="Zfp507"/>
</dbReference>
<dbReference type="VEuPathDB" id="HostDB:ENSMUSG00000044452"/>
<dbReference type="eggNOG" id="KOG1721">
    <property type="taxonomic scope" value="Eukaryota"/>
</dbReference>
<dbReference type="GeneTree" id="ENSGT00490000043434"/>
<dbReference type="HOGENOM" id="CLU_013272_0_0_1"/>
<dbReference type="InParanoid" id="Q6ZPY5"/>
<dbReference type="OMA" id="KIGCEGR"/>
<dbReference type="OrthoDB" id="10066771at2759"/>
<dbReference type="PhylomeDB" id="Q6ZPY5"/>
<dbReference type="TreeFam" id="TF331496"/>
<dbReference type="BioGRID-ORCS" id="668501">
    <property type="hits" value="3 hits in 77 CRISPR screens"/>
</dbReference>
<dbReference type="ChiTaRS" id="Zfp507">
    <property type="organism name" value="mouse"/>
</dbReference>
<dbReference type="PRO" id="PR:Q6ZPY5"/>
<dbReference type="Proteomes" id="UP000000589">
    <property type="component" value="Chromosome 7"/>
</dbReference>
<dbReference type="RNAct" id="Q6ZPY5">
    <property type="molecule type" value="protein"/>
</dbReference>
<dbReference type="Bgee" id="ENSMUSG00000044452">
    <property type="expression patterns" value="Expressed in manus and 225 other cell types or tissues"/>
</dbReference>
<dbReference type="ExpressionAtlas" id="Q6ZPY5">
    <property type="expression patterns" value="baseline and differential"/>
</dbReference>
<dbReference type="GO" id="GO:0005634">
    <property type="term" value="C:nucleus"/>
    <property type="evidence" value="ECO:0007669"/>
    <property type="project" value="UniProtKB-SubCell"/>
</dbReference>
<dbReference type="GO" id="GO:0003677">
    <property type="term" value="F:DNA binding"/>
    <property type="evidence" value="ECO:0007669"/>
    <property type="project" value="UniProtKB-KW"/>
</dbReference>
<dbReference type="GO" id="GO:0008270">
    <property type="term" value="F:zinc ion binding"/>
    <property type="evidence" value="ECO:0007669"/>
    <property type="project" value="UniProtKB-KW"/>
</dbReference>
<dbReference type="FunFam" id="3.30.160.60:FF:000719">
    <property type="entry name" value="Zinc finger protein 507"/>
    <property type="match status" value="1"/>
</dbReference>
<dbReference type="FunFam" id="3.30.160.60:FF:000884">
    <property type="entry name" value="Zinc finger protein 507"/>
    <property type="match status" value="1"/>
</dbReference>
<dbReference type="FunFam" id="3.30.160.60:FF:000964">
    <property type="entry name" value="zinc finger protein 507"/>
    <property type="match status" value="1"/>
</dbReference>
<dbReference type="Gene3D" id="3.30.160.60">
    <property type="entry name" value="Classic Zinc Finger"/>
    <property type="match status" value="4"/>
</dbReference>
<dbReference type="InterPro" id="IPR050688">
    <property type="entry name" value="Zinc_finger/UBP_domain"/>
</dbReference>
<dbReference type="InterPro" id="IPR036236">
    <property type="entry name" value="Znf_C2H2_sf"/>
</dbReference>
<dbReference type="InterPro" id="IPR013087">
    <property type="entry name" value="Znf_C2H2_type"/>
</dbReference>
<dbReference type="PANTHER" id="PTHR24403">
    <property type="entry name" value="ZINC FINGER PROTEIN"/>
    <property type="match status" value="1"/>
</dbReference>
<dbReference type="PANTHER" id="PTHR24403:SF74">
    <property type="entry name" value="ZINC FINGER PROTEIN 507"/>
    <property type="match status" value="1"/>
</dbReference>
<dbReference type="SMART" id="SM00355">
    <property type="entry name" value="ZnF_C2H2"/>
    <property type="match status" value="9"/>
</dbReference>
<dbReference type="SUPFAM" id="SSF57667">
    <property type="entry name" value="beta-beta-alpha zinc fingers"/>
    <property type="match status" value="2"/>
</dbReference>
<dbReference type="PROSITE" id="PS00028">
    <property type="entry name" value="ZINC_FINGER_C2H2_1"/>
    <property type="match status" value="3"/>
</dbReference>
<dbReference type="PROSITE" id="PS50157">
    <property type="entry name" value="ZINC_FINGER_C2H2_2"/>
    <property type="match status" value="5"/>
</dbReference>
<proteinExistence type="evidence at transcript level"/>